<gene>
    <name type="primary">ftsX</name>
    <name type="ordered locus">MT3185</name>
</gene>
<proteinExistence type="inferred from homology"/>
<dbReference type="EMBL" id="AE000516">
    <property type="protein sequence ID" value="AAK47523.1"/>
    <property type="molecule type" value="Genomic_DNA"/>
</dbReference>
<dbReference type="PIR" id="D70919">
    <property type="entry name" value="D70919"/>
</dbReference>
<dbReference type="RefSeq" id="WP_003416117.1">
    <property type="nucleotide sequence ID" value="NZ_KK341227.1"/>
</dbReference>
<dbReference type="SMR" id="P9WG18"/>
<dbReference type="KEGG" id="mtc:MT3185"/>
<dbReference type="PATRIC" id="fig|83331.31.peg.3434"/>
<dbReference type="HOGENOM" id="CLU_073546_1_0_11"/>
<dbReference type="Proteomes" id="UP000001020">
    <property type="component" value="Chromosome"/>
</dbReference>
<dbReference type="GO" id="GO:0005886">
    <property type="term" value="C:plasma membrane"/>
    <property type="evidence" value="ECO:0007669"/>
    <property type="project" value="UniProtKB-SubCell"/>
</dbReference>
<dbReference type="GO" id="GO:0051301">
    <property type="term" value="P:cell division"/>
    <property type="evidence" value="ECO:0000250"/>
    <property type="project" value="UniProtKB"/>
</dbReference>
<dbReference type="FunFam" id="3.30.70.3040:FF:000004">
    <property type="entry name" value="Cell division protein FtsX"/>
    <property type="match status" value="1"/>
</dbReference>
<dbReference type="Gene3D" id="3.30.70.3040">
    <property type="match status" value="1"/>
</dbReference>
<dbReference type="InterPro" id="IPR003838">
    <property type="entry name" value="ABC3_permease_C"/>
</dbReference>
<dbReference type="InterPro" id="IPR004513">
    <property type="entry name" value="FtsX"/>
</dbReference>
<dbReference type="InterPro" id="IPR047929">
    <property type="entry name" value="FtsX_actino"/>
</dbReference>
<dbReference type="InterPro" id="IPR040690">
    <property type="entry name" value="FtsX_ECD"/>
</dbReference>
<dbReference type="NCBIfam" id="NF038346">
    <property type="entry name" value="FtsX_actino"/>
    <property type="match status" value="1"/>
</dbReference>
<dbReference type="PANTHER" id="PTHR47755">
    <property type="entry name" value="CELL DIVISION PROTEIN FTSX"/>
    <property type="match status" value="1"/>
</dbReference>
<dbReference type="PANTHER" id="PTHR47755:SF1">
    <property type="entry name" value="CELL DIVISION PROTEIN FTSX"/>
    <property type="match status" value="1"/>
</dbReference>
<dbReference type="Pfam" id="PF02687">
    <property type="entry name" value="FtsX"/>
    <property type="match status" value="1"/>
</dbReference>
<dbReference type="Pfam" id="PF18075">
    <property type="entry name" value="FtsX_ECD"/>
    <property type="match status" value="1"/>
</dbReference>
<dbReference type="PIRSF" id="PIRSF003097">
    <property type="entry name" value="FtsX"/>
    <property type="match status" value="1"/>
</dbReference>
<evidence type="ECO:0000250" key="1"/>
<evidence type="ECO:0000255" key="2"/>
<evidence type="ECO:0000305" key="3"/>
<name>FTSX_MYCTO</name>
<feature type="chain" id="PRO_0000428439" description="Cell division protein FtsX">
    <location>
        <begin position="1"/>
        <end position="297"/>
    </location>
</feature>
<feature type="topological domain" description="Cytoplasmic" evidence="2">
    <location>
        <begin position="1"/>
        <end position="21"/>
    </location>
</feature>
<feature type="transmembrane region" description="Helical" evidence="2">
    <location>
        <begin position="22"/>
        <end position="42"/>
    </location>
</feature>
<feature type="topological domain" description="Extracellular" evidence="2">
    <location>
        <begin position="43"/>
        <end position="171"/>
    </location>
</feature>
<feature type="transmembrane region" description="Helical" evidence="2">
    <location>
        <begin position="172"/>
        <end position="192"/>
    </location>
</feature>
<feature type="topological domain" description="Cytoplasmic" evidence="2">
    <location>
        <begin position="193"/>
        <end position="219"/>
    </location>
</feature>
<feature type="transmembrane region" description="Helical" evidence="2">
    <location>
        <begin position="220"/>
        <end position="240"/>
    </location>
</feature>
<feature type="topological domain" description="Extracellular" evidence="2">
    <location>
        <begin position="241"/>
        <end position="267"/>
    </location>
</feature>
<feature type="transmembrane region" description="Helical" evidence="2">
    <location>
        <begin position="268"/>
        <end position="288"/>
    </location>
</feature>
<feature type="topological domain" description="Cytoplasmic" evidence="2">
    <location>
        <begin position="289"/>
        <end position="297"/>
    </location>
</feature>
<organism>
    <name type="scientific">Mycobacterium tuberculosis (strain CDC 1551 / Oshkosh)</name>
    <dbReference type="NCBI Taxonomy" id="83331"/>
    <lineage>
        <taxon>Bacteria</taxon>
        <taxon>Bacillati</taxon>
        <taxon>Actinomycetota</taxon>
        <taxon>Actinomycetes</taxon>
        <taxon>Mycobacteriales</taxon>
        <taxon>Mycobacteriaceae</taxon>
        <taxon>Mycobacterium</taxon>
        <taxon>Mycobacterium tuberculosis complex</taxon>
    </lineage>
</organism>
<keyword id="KW-0131">Cell cycle</keyword>
<keyword id="KW-0132">Cell division</keyword>
<keyword id="KW-1003">Cell membrane</keyword>
<keyword id="KW-0472">Membrane</keyword>
<keyword id="KW-1185">Reference proteome</keyword>
<keyword id="KW-0812">Transmembrane</keyword>
<keyword id="KW-1133">Transmembrane helix</keyword>
<reference key="1">
    <citation type="journal article" date="2002" name="J. Bacteriol.">
        <title>Whole-genome comparison of Mycobacterium tuberculosis clinical and laboratory strains.</title>
        <authorList>
            <person name="Fleischmann R.D."/>
            <person name="Alland D."/>
            <person name="Eisen J.A."/>
            <person name="Carpenter L."/>
            <person name="White O."/>
            <person name="Peterson J.D."/>
            <person name="DeBoy R.T."/>
            <person name="Dodson R.J."/>
            <person name="Gwinn M.L."/>
            <person name="Haft D.H."/>
            <person name="Hickey E.K."/>
            <person name="Kolonay J.F."/>
            <person name="Nelson W.C."/>
            <person name="Umayam L.A."/>
            <person name="Ermolaeva M.D."/>
            <person name="Salzberg S.L."/>
            <person name="Delcher A."/>
            <person name="Utterback T.R."/>
            <person name="Weidman J.F."/>
            <person name="Khouri H.M."/>
            <person name="Gill J."/>
            <person name="Mikula A."/>
            <person name="Bishai W."/>
            <person name="Jacobs W.R. Jr."/>
            <person name="Venter J.C."/>
            <person name="Fraser C.M."/>
        </authorList>
    </citation>
    <scope>NUCLEOTIDE SEQUENCE [LARGE SCALE GENOMIC DNA]</scope>
    <source>
        <strain>CDC 1551 / Oshkosh</strain>
    </source>
</reference>
<comment type="function">
    <text evidence="1">Part of the ABC transporter FtsEX involved in cellular division.</text>
</comment>
<comment type="subunit">
    <text evidence="1">Forms a membrane-associated complex with FtsE.</text>
</comment>
<comment type="subcellular location">
    <subcellularLocation>
        <location evidence="1">Cell membrane</location>
        <topology evidence="1">Multi-pass membrane protein</topology>
    </subcellularLocation>
</comment>
<comment type="similarity">
    <text evidence="3">Belongs to the ABC-4 integral membrane protein family. FtsX subfamily.</text>
</comment>
<protein>
    <recommendedName>
        <fullName>Cell division protein FtsX</fullName>
    </recommendedName>
</protein>
<sequence length="297" mass="32819">MRFGFLLNEVLTGFRRNVTMTIAMILTTAISVGLFGGGMLVVRLADSSRAIYLDRVESQVFLTEDVSANDSSCDTTACKALREKIETRSDVKAVRFLNRQQAYDDAIRKFPQFKDVAGKDSFPASFIVKLENPEQHKDFDTAMKGQPGVLDVLNQKELIDRLFAVLDGLSNAAFAVALVQAIGAILLIANMVQVAAYTRRTEIGIMRLVGASRWYTQLPFLVEAMLAATMGVGIAVAGLMVVRALFLENALNQFYQANLIAKVDYADILFITPWLLLLGVAMSGLTAYLTLRLYVRR</sequence>
<accession>P9WG18</accession>
<accession>L0TBK0</accession>
<accession>O08113</accession>
<accession>P96293</accession>